<reference key="1">
    <citation type="submission" date="2006-08" db="EMBL/GenBank/DDBJ databases">
        <title>Complete sequence of chromosome 1 of Burkholderia cenocepacia HI2424.</title>
        <authorList>
            <person name="Copeland A."/>
            <person name="Lucas S."/>
            <person name="Lapidus A."/>
            <person name="Barry K."/>
            <person name="Detter J.C."/>
            <person name="Glavina del Rio T."/>
            <person name="Hammon N."/>
            <person name="Israni S."/>
            <person name="Pitluck S."/>
            <person name="Chain P."/>
            <person name="Malfatti S."/>
            <person name="Shin M."/>
            <person name="Vergez L."/>
            <person name="Schmutz J."/>
            <person name="Larimer F."/>
            <person name="Land M."/>
            <person name="Hauser L."/>
            <person name="Kyrpides N."/>
            <person name="Kim E."/>
            <person name="LiPuma J.J."/>
            <person name="Gonzalez C.F."/>
            <person name="Konstantinidis K."/>
            <person name="Tiedje J.M."/>
            <person name="Richardson P."/>
        </authorList>
    </citation>
    <scope>NUCLEOTIDE SEQUENCE [LARGE SCALE GENOMIC DNA]</scope>
    <source>
        <strain>HI2424</strain>
    </source>
</reference>
<sequence>MSKPSDRINLTNQFLIAMPNMADPTFSGTVVYLCDHSERGALGLVINRPTDIDLESLFNRIDLKLDIEPLLHIPVYFGGPVQTERGFVLHEPVEGASYNSSMSVDGGLEMTTSKDVLEAVATGTGPKRFLLTLGHAGWGAGQLEEEIARNGWLTVAADPRIVFDTPAEERFEAALGLLGVSSSMLSGEAGHA</sequence>
<accession>A0K540</accession>
<comment type="similarity">
    <text evidence="1">Belongs to the UPF0301 (AlgH) family.</text>
</comment>
<evidence type="ECO:0000255" key="1">
    <source>
        <dbReference type="HAMAP-Rule" id="MF_00758"/>
    </source>
</evidence>
<proteinExistence type="inferred from homology"/>
<organism>
    <name type="scientific">Burkholderia cenocepacia (strain HI2424)</name>
    <dbReference type="NCBI Taxonomy" id="331272"/>
    <lineage>
        <taxon>Bacteria</taxon>
        <taxon>Pseudomonadati</taxon>
        <taxon>Pseudomonadota</taxon>
        <taxon>Betaproteobacteria</taxon>
        <taxon>Burkholderiales</taxon>
        <taxon>Burkholderiaceae</taxon>
        <taxon>Burkholderia</taxon>
        <taxon>Burkholderia cepacia complex</taxon>
    </lineage>
</organism>
<name>Y864_BURCH</name>
<feature type="chain" id="PRO_1000046643" description="UPF0301 protein Bcen2424_0864">
    <location>
        <begin position="1"/>
        <end position="192"/>
    </location>
</feature>
<gene>
    <name type="ordered locus">Bcen2424_0864</name>
</gene>
<dbReference type="EMBL" id="CP000458">
    <property type="protein sequence ID" value="ABK07617.1"/>
    <property type="molecule type" value="Genomic_DNA"/>
</dbReference>
<dbReference type="RefSeq" id="WP_011544736.1">
    <property type="nucleotide sequence ID" value="NC_008542.1"/>
</dbReference>
<dbReference type="SMR" id="A0K540"/>
<dbReference type="KEGG" id="bch:Bcen2424_0864"/>
<dbReference type="HOGENOM" id="CLU_057596_1_0_4"/>
<dbReference type="GO" id="GO:0005829">
    <property type="term" value="C:cytosol"/>
    <property type="evidence" value="ECO:0007669"/>
    <property type="project" value="TreeGrafter"/>
</dbReference>
<dbReference type="Gene3D" id="3.40.1740.10">
    <property type="entry name" value="VC0467-like"/>
    <property type="match status" value="1"/>
</dbReference>
<dbReference type="HAMAP" id="MF_00758">
    <property type="entry name" value="UPF0301"/>
    <property type="match status" value="1"/>
</dbReference>
<dbReference type="InterPro" id="IPR003774">
    <property type="entry name" value="AlgH-like"/>
</dbReference>
<dbReference type="NCBIfam" id="NF001266">
    <property type="entry name" value="PRK00228.1-1"/>
    <property type="match status" value="1"/>
</dbReference>
<dbReference type="NCBIfam" id="NF001267">
    <property type="entry name" value="PRK00228.1-2"/>
    <property type="match status" value="1"/>
</dbReference>
<dbReference type="PANTHER" id="PTHR30327">
    <property type="entry name" value="UNCHARACTERIZED PROTEIN YQGE"/>
    <property type="match status" value="1"/>
</dbReference>
<dbReference type="PANTHER" id="PTHR30327:SF1">
    <property type="entry name" value="UPF0301 PROTEIN YQGE"/>
    <property type="match status" value="1"/>
</dbReference>
<dbReference type="Pfam" id="PF02622">
    <property type="entry name" value="DUF179"/>
    <property type="match status" value="1"/>
</dbReference>
<dbReference type="SUPFAM" id="SSF143456">
    <property type="entry name" value="VC0467-like"/>
    <property type="match status" value="1"/>
</dbReference>
<protein>
    <recommendedName>
        <fullName evidence="1">UPF0301 protein Bcen2424_0864</fullName>
    </recommendedName>
</protein>